<reference key="1">
    <citation type="journal article" date="2003" name="Microbiology">
        <title>The complete genome sequence of the avian pathogen Mycoplasma gallisepticum strain R(low).</title>
        <authorList>
            <person name="Papazisi L."/>
            <person name="Gorton T.S."/>
            <person name="Kutish G."/>
            <person name="Markham P.F."/>
            <person name="Browning G.F."/>
            <person name="Nguyen D.K."/>
            <person name="Swartzell S."/>
            <person name="Madan A."/>
            <person name="Mahairas G."/>
            <person name="Geary S.J."/>
        </authorList>
    </citation>
    <scope>NUCLEOTIDE SEQUENCE [LARGE SCALE GENOMIC DNA]</scope>
    <source>
        <strain>R(low / passage 15 / clone 2)</strain>
    </source>
</reference>
<gene>
    <name evidence="1" type="primary">miaA</name>
    <name type="ordered locus">MYCGA1680</name>
    <name type="ORF">MGA_0914</name>
</gene>
<name>MIAA_MYCGA</name>
<keyword id="KW-0067">ATP-binding</keyword>
<keyword id="KW-0460">Magnesium</keyword>
<keyword id="KW-0547">Nucleotide-binding</keyword>
<keyword id="KW-1185">Reference proteome</keyword>
<keyword id="KW-0808">Transferase</keyword>
<keyword id="KW-0819">tRNA processing</keyword>
<comment type="function">
    <text evidence="1">Catalyzes the transfer of a dimethylallyl group onto the adenine at position 37 in tRNAs that read codons beginning with uridine, leading to the formation of N6-(dimethylallyl)adenosine (i(6)A).</text>
</comment>
<comment type="catalytic activity">
    <reaction evidence="1">
        <text>adenosine(37) in tRNA + dimethylallyl diphosphate = N(6)-dimethylallyladenosine(37) in tRNA + diphosphate</text>
        <dbReference type="Rhea" id="RHEA:26482"/>
        <dbReference type="Rhea" id="RHEA-COMP:10162"/>
        <dbReference type="Rhea" id="RHEA-COMP:10375"/>
        <dbReference type="ChEBI" id="CHEBI:33019"/>
        <dbReference type="ChEBI" id="CHEBI:57623"/>
        <dbReference type="ChEBI" id="CHEBI:74411"/>
        <dbReference type="ChEBI" id="CHEBI:74415"/>
        <dbReference type="EC" id="2.5.1.75"/>
    </reaction>
</comment>
<comment type="cofactor">
    <cofactor evidence="1">
        <name>Mg(2+)</name>
        <dbReference type="ChEBI" id="CHEBI:18420"/>
    </cofactor>
</comment>
<comment type="subunit">
    <text evidence="1">Monomer.</text>
</comment>
<comment type="similarity">
    <text evidence="1">Belongs to the IPP transferase family.</text>
</comment>
<organism>
    <name type="scientific">Mycoplasmoides gallisepticum (strain R(low / passage 15 / clone 2))</name>
    <name type="common">Mycoplasma gallisepticum</name>
    <dbReference type="NCBI Taxonomy" id="710127"/>
    <lineage>
        <taxon>Bacteria</taxon>
        <taxon>Bacillati</taxon>
        <taxon>Mycoplasmatota</taxon>
        <taxon>Mycoplasmoidales</taxon>
        <taxon>Mycoplasmoidaceae</taxon>
        <taxon>Mycoplasmoides</taxon>
    </lineage>
</organism>
<proteinExistence type="inferred from homology"/>
<feature type="chain" id="PRO_0000377235" description="tRNA dimethylallyltransferase">
    <location>
        <begin position="1"/>
        <end position="306"/>
    </location>
</feature>
<feature type="binding site" evidence="1">
    <location>
        <begin position="12"/>
        <end position="19"/>
    </location>
    <ligand>
        <name>ATP</name>
        <dbReference type="ChEBI" id="CHEBI:30616"/>
    </ligand>
</feature>
<feature type="site" description="Interaction with substrate tRNA" evidence="1">
    <location>
        <position position="100"/>
    </location>
</feature>
<sequence length="306" mass="36193">MIYSKRLILVVGPTGTKKSYLANMLAKKLNVPIISADAYQVYKELNAGVNKPSEKTLSEIKYHFISNISIFDEWSIAHFNKRAKEILEQAPDWTIVCGGSHLYVNSLINDYQLEKQELDTDLFDALDKLDNQEIFNQLCEYDFQEAIKIGKNNRKRLLRALYLFKKYGKKAKNDSKKFDYVVVKCMSDKEKLFPYLSKRLDEMIHDLNWTKEIEYLDKIITDKKLDKELIAMKALGYKEIYDAWKNNQPIDKEIINKKFKRLVKHQLTWTRNKFNDGMKQFTFNFFEDDANRTCDEIIEYIKSNHD</sequence>
<evidence type="ECO:0000255" key="1">
    <source>
        <dbReference type="HAMAP-Rule" id="MF_00185"/>
    </source>
</evidence>
<dbReference type="EC" id="2.5.1.75" evidence="1"/>
<dbReference type="EMBL" id="AE015450">
    <property type="protein sequence ID" value="AAP56518.1"/>
    <property type="molecule type" value="Genomic_DNA"/>
</dbReference>
<dbReference type="RefSeq" id="WP_011113400.1">
    <property type="nucleotide sequence ID" value="NC_004829.2"/>
</dbReference>
<dbReference type="SMR" id="Q7NBU2"/>
<dbReference type="KEGG" id="mga:MGA_0914"/>
<dbReference type="PATRIC" id="fig|233150.7.peg.185"/>
<dbReference type="HOGENOM" id="CLU_032616_0_1_14"/>
<dbReference type="OrthoDB" id="9776390at2"/>
<dbReference type="Proteomes" id="UP000001418">
    <property type="component" value="Chromosome"/>
</dbReference>
<dbReference type="GO" id="GO:0005524">
    <property type="term" value="F:ATP binding"/>
    <property type="evidence" value="ECO:0007669"/>
    <property type="project" value="UniProtKB-UniRule"/>
</dbReference>
<dbReference type="GO" id="GO:0052381">
    <property type="term" value="F:tRNA dimethylallyltransferase activity"/>
    <property type="evidence" value="ECO:0007669"/>
    <property type="project" value="UniProtKB-UniRule"/>
</dbReference>
<dbReference type="GO" id="GO:0006400">
    <property type="term" value="P:tRNA modification"/>
    <property type="evidence" value="ECO:0007669"/>
    <property type="project" value="TreeGrafter"/>
</dbReference>
<dbReference type="Gene3D" id="1.10.20.140">
    <property type="match status" value="1"/>
</dbReference>
<dbReference type="Gene3D" id="3.40.50.300">
    <property type="entry name" value="P-loop containing nucleotide triphosphate hydrolases"/>
    <property type="match status" value="1"/>
</dbReference>
<dbReference type="HAMAP" id="MF_00185">
    <property type="entry name" value="IPP_trans"/>
    <property type="match status" value="1"/>
</dbReference>
<dbReference type="InterPro" id="IPR039657">
    <property type="entry name" value="Dimethylallyltransferase"/>
</dbReference>
<dbReference type="InterPro" id="IPR008144">
    <property type="entry name" value="Guanylate_kin-like_dom"/>
</dbReference>
<dbReference type="InterPro" id="IPR018022">
    <property type="entry name" value="IPT"/>
</dbReference>
<dbReference type="InterPro" id="IPR027417">
    <property type="entry name" value="P-loop_NTPase"/>
</dbReference>
<dbReference type="PANTHER" id="PTHR11088">
    <property type="entry name" value="TRNA DIMETHYLALLYLTRANSFERASE"/>
    <property type="match status" value="1"/>
</dbReference>
<dbReference type="PANTHER" id="PTHR11088:SF60">
    <property type="entry name" value="TRNA DIMETHYLALLYLTRANSFERASE"/>
    <property type="match status" value="1"/>
</dbReference>
<dbReference type="Pfam" id="PF01715">
    <property type="entry name" value="IPPT"/>
    <property type="match status" value="1"/>
</dbReference>
<dbReference type="SUPFAM" id="SSF52540">
    <property type="entry name" value="P-loop containing nucleoside triphosphate hydrolases"/>
    <property type="match status" value="1"/>
</dbReference>
<accession>Q7NBU2</accession>
<protein>
    <recommendedName>
        <fullName evidence="1">tRNA dimethylallyltransferase</fullName>
        <ecNumber evidence="1">2.5.1.75</ecNumber>
    </recommendedName>
    <alternativeName>
        <fullName evidence="1">Dimethylallyl diphosphate:tRNA dimethylallyltransferase</fullName>
        <shortName evidence="1">DMAPP:tRNA dimethylallyltransferase</shortName>
        <shortName evidence="1">DMATase</shortName>
    </alternativeName>
    <alternativeName>
        <fullName evidence="1">Isopentenyl-diphosphate:tRNA isopentenyltransferase</fullName>
        <shortName evidence="1">IPP transferase</shortName>
        <shortName evidence="1">IPPT</shortName>
        <shortName evidence="1">IPTase</shortName>
    </alternativeName>
</protein>